<accession>Q97EH8</accession>
<gene>
    <name evidence="1" type="primary">rplC</name>
    <name type="ordered locus">CA_C3133</name>
</gene>
<proteinExistence type="inferred from homology"/>
<comment type="function">
    <text evidence="1">One of the primary rRNA binding proteins, it binds directly near the 3'-end of the 23S rRNA, where it nucleates assembly of the 50S subunit.</text>
</comment>
<comment type="subunit">
    <text evidence="1">Part of the 50S ribosomal subunit. Forms a cluster with proteins L14 and L19.</text>
</comment>
<comment type="similarity">
    <text evidence="1">Belongs to the universal ribosomal protein uL3 family.</text>
</comment>
<reference key="1">
    <citation type="journal article" date="2001" name="J. Bacteriol.">
        <title>Genome sequence and comparative analysis of the solvent-producing bacterium Clostridium acetobutylicum.</title>
        <authorList>
            <person name="Noelling J."/>
            <person name="Breton G."/>
            <person name="Omelchenko M.V."/>
            <person name="Makarova K.S."/>
            <person name="Zeng Q."/>
            <person name="Gibson R."/>
            <person name="Lee H.M."/>
            <person name="Dubois J."/>
            <person name="Qiu D."/>
            <person name="Hitti J."/>
            <person name="Wolf Y.I."/>
            <person name="Tatusov R.L."/>
            <person name="Sabathe F."/>
            <person name="Doucette-Stamm L.A."/>
            <person name="Soucaille P."/>
            <person name="Daly M.J."/>
            <person name="Bennett G.N."/>
            <person name="Koonin E.V."/>
            <person name="Smith D.R."/>
        </authorList>
    </citation>
    <scope>NUCLEOTIDE SEQUENCE [LARGE SCALE GENOMIC DNA]</scope>
    <source>
        <strain>ATCC 824 / DSM 792 / JCM 1419 / IAM 19013 / LMG 5710 / NBRC 13948 / NRRL B-527 / VKM B-1787 / 2291 / W</strain>
    </source>
</reference>
<protein>
    <recommendedName>
        <fullName evidence="1">Large ribosomal subunit protein uL3</fullName>
    </recommendedName>
    <alternativeName>
        <fullName evidence="3">50S ribosomal protein L3</fullName>
    </alternativeName>
</protein>
<keyword id="KW-1185">Reference proteome</keyword>
<keyword id="KW-0687">Ribonucleoprotein</keyword>
<keyword id="KW-0689">Ribosomal protein</keyword>
<keyword id="KW-0694">RNA-binding</keyword>
<keyword id="KW-0699">rRNA-binding</keyword>
<dbReference type="EMBL" id="AE001437">
    <property type="protein sequence ID" value="AAK81072.1"/>
    <property type="molecule type" value="Genomic_DNA"/>
</dbReference>
<dbReference type="PIR" id="E97285">
    <property type="entry name" value="E97285"/>
</dbReference>
<dbReference type="RefSeq" id="NP_349732.1">
    <property type="nucleotide sequence ID" value="NC_003030.1"/>
</dbReference>
<dbReference type="RefSeq" id="WP_010966412.1">
    <property type="nucleotide sequence ID" value="NC_003030.1"/>
</dbReference>
<dbReference type="SMR" id="Q97EH8"/>
<dbReference type="STRING" id="272562.CA_C3133"/>
<dbReference type="GeneID" id="44999620"/>
<dbReference type="KEGG" id="cac:CA_C3133"/>
<dbReference type="PATRIC" id="fig|272562.8.peg.3316"/>
<dbReference type="eggNOG" id="COG0087">
    <property type="taxonomic scope" value="Bacteria"/>
</dbReference>
<dbReference type="HOGENOM" id="CLU_044142_4_1_9"/>
<dbReference type="OrthoDB" id="9806135at2"/>
<dbReference type="Proteomes" id="UP000000814">
    <property type="component" value="Chromosome"/>
</dbReference>
<dbReference type="GO" id="GO:0022625">
    <property type="term" value="C:cytosolic large ribosomal subunit"/>
    <property type="evidence" value="ECO:0007669"/>
    <property type="project" value="TreeGrafter"/>
</dbReference>
<dbReference type="GO" id="GO:0019843">
    <property type="term" value="F:rRNA binding"/>
    <property type="evidence" value="ECO:0007669"/>
    <property type="project" value="UniProtKB-UniRule"/>
</dbReference>
<dbReference type="GO" id="GO:0003735">
    <property type="term" value="F:structural constituent of ribosome"/>
    <property type="evidence" value="ECO:0007669"/>
    <property type="project" value="InterPro"/>
</dbReference>
<dbReference type="GO" id="GO:0006412">
    <property type="term" value="P:translation"/>
    <property type="evidence" value="ECO:0007669"/>
    <property type="project" value="UniProtKB-UniRule"/>
</dbReference>
<dbReference type="FunFam" id="2.40.30.10:FF:000004">
    <property type="entry name" value="50S ribosomal protein L3"/>
    <property type="match status" value="1"/>
</dbReference>
<dbReference type="FunFam" id="3.30.160.810:FF:000001">
    <property type="entry name" value="50S ribosomal protein L3"/>
    <property type="match status" value="1"/>
</dbReference>
<dbReference type="Gene3D" id="3.30.160.810">
    <property type="match status" value="1"/>
</dbReference>
<dbReference type="Gene3D" id="2.40.30.10">
    <property type="entry name" value="Translation factors"/>
    <property type="match status" value="1"/>
</dbReference>
<dbReference type="HAMAP" id="MF_01325_B">
    <property type="entry name" value="Ribosomal_uL3_B"/>
    <property type="match status" value="1"/>
</dbReference>
<dbReference type="InterPro" id="IPR000597">
    <property type="entry name" value="Ribosomal_uL3"/>
</dbReference>
<dbReference type="InterPro" id="IPR019927">
    <property type="entry name" value="Ribosomal_uL3_bac/org-type"/>
</dbReference>
<dbReference type="InterPro" id="IPR019926">
    <property type="entry name" value="Ribosomal_uL3_CS"/>
</dbReference>
<dbReference type="InterPro" id="IPR009000">
    <property type="entry name" value="Transl_B-barrel_sf"/>
</dbReference>
<dbReference type="NCBIfam" id="TIGR03625">
    <property type="entry name" value="L3_bact"/>
    <property type="match status" value="1"/>
</dbReference>
<dbReference type="PANTHER" id="PTHR11229">
    <property type="entry name" value="50S RIBOSOMAL PROTEIN L3"/>
    <property type="match status" value="1"/>
</dbReference>
<dbReference type="PANTHER" id="PTHR11229:SF16">
    <property type="entry name" value="LARGE RIBOSOMAL SUBUNIT PROTEIN UL3C"/>
    <property type="match status" value="1"/>
</dbReference>
<dbReference type="Pfam" id="PF00297">
    <property type="entry name" value="Ribosomal_L3"/>
    <property type="match status" value="1"/>
</dbReference>
<dbReference type="SUPFAM" id="SSF50447">
    <property type="entry name" value="Translation proteins"/>
    <property type="match status" value="1"/>
</dbReference>
<dbReference type="PROSITE" id="PS00474">
    <property type="entry name" value="RIBOSOMAL_L3"/>
    <property type="match status" value="1"/>
</dbReference>
<name>RL3_CLOAB</name>
<sequence>MKKGILGKKLGMTQIFNEEGKVVPVTVIEAGPCVVIQKKTSEKEGYDAIQVGFGTIREKLVNKPLKGHFAKGNVELKRFVKEFRLEDTSSYEVGAEIKADIFAAGEKVDVSGVSKGKGFQGTIRRWGAHRGPMSHGSKFHRAVGSMGGSSDPSRTFKSKKMPGHMGHVNTTVLNVEVAKVIPEKNLILIKGGVPGPNKSFVVIKNSVKA</sequence>
<organism>
    <name type="scientific">Clostridium acetobutylicum (strain ATCC 824 / DSM 792 / JCM 1419 / IAM 19013 / LMG 5710 / NBRC 13948 / NRRL B-527 / VKM B-1787 / 2291 / W)</name>
    <dbReference type="NCBI Taxonomy" id="272562"/>
    <lineage>
        <taxon>Bacteria</taxon>
        <taxon>Bacillati</taxon>
        <taxon>Bacillota</taxon>
        <taxon>Clostridia</taxon>
        <taxon>Eubacteriales</taxon>
        <taxon>Clostridiaceae</taxon>
        <taxon>Clostridium</taxon>
    </lineage>
</organism>
<feature type="chain" id="PRO_0000077090" description="Large ribosomal subunit protein uL3">
    <location>
        <begin position="1"/>
        <end position="209"/>
    </location>
</feature>
<feature type="region of interest" description="Disordered" evidence="2">
    <location>
        <begin position="141"/>
        <end position="164"/>
    </location>
</feature>
<evidence type="ECO:0000255" key="1">
    <source>
        <dbReference type="HAMAP-Rule" id="MF_01325"/>
    </source>
</evidence>
<evidence type="ECO:0000256" key="2">
    <source>
        <dbReference type="SAM" id="MobiDB-lite"/>
    </source>
</evidence>
<evidence type="ECO:0000305" key="3"/>